<dbReference type="EC" id="2.7.4.6" evidence="1"/>
<dbReference type="EMBL" id="BA000040">
    <property type="protein sequence ID" value="BAC49384.1"/>
    <property type="molecule type" value="Genomic_DNA"/>
</dbReference>
<dbReference type="RefSeq" id="NP_770759.1">
    <property type="nucleotide sequence ID" value="NC_004463.1"/>
</dbReference>
<dbReference type="RefSeq" id="WP_011086893.1">
    <property type="nucleotide sequence ID" value="NZ_CP011360.1"/>
</dbReference>
<dbReference type="SMR" id="Q89MS3"/>
<dbReference type="FunCoup" id="Q89MS3">
    <property type="interactions" value="698"/>
</dbReference>
<dbReference type="STRING" id="224911.AAV28_17635"/>
<dbReference type="EnsemblBacteria" id="BAC49384">
    <property type="protein sequence ID" value="BAC49384"/>
    <property type="gene ID" value="BAC49384"/>
</dbReference>
<dbReference type="GeneID" id="46491120"/>
<dbReference type="KEGG" id="bja:blr4119"/>
<dbReference type="PATRIC" id="fig|224911.44.peg.3831"/>
<dbReference type="eggNOG" id="COG0105">
    <property type="taxonomic scope" value="Bacteria"/>
</dbReference>
<dbReference type="HOGENOM" id="CLU_060216_8_1_5"/>
<dbReference type="InParanoid" id="Q89MS3"/>
<dbReference type="OrthoDB" id="9801161at2"/>
<dbReference type="PhylomeDB" id="Q89MS3"/>
<dbReference type="Proteomes" id="UP000002526">
    <property type="component" value="Chromosome"/>
</dbReference>
<dbReference type="GO" id="GO:0005737">
    <property type="term" value="C:cytoplasm"/>
    <property type="evidence" value="ECO:0007669"/>
    <property type="project" value="UniProtKB-SubCell"/>
</dbReference>
<dbReference type="GO" id="GO:0005524">
    <property type="term" value="F:ATP binding"/>
    <property type="evidence" value="ECO:0007669"/>
    <property type="project" value="UniProtKB-UniRule"/>
</dbReference>
<dbReference type="GO" id="GO:0046872">
    <property type="term" value="F:metal ion binding"/>
    <property type="evidence" value="ECO:0007669"/>
    <property type="project" value="UniProtKB-KW"/>
</dbReference>
<dbReference type="GO" id="GO:0004550">
    <property type="term" value="F:nucleoside diphosphate kinase activity"/>
    <property type="evidence" value="ECO:0007669"/>
    <property type="project" value="UniProtKB-UniRule"/>
</dbReference>
<dbReference type="GO" id="GO:0006241">
    <property type="term" value="P:CTP biosynthetic process"/>
    <property type="evidence" value="ECO:0007669"/>
    <property type="project" value="UniProtKB-UniRule"/>
</dbReference>
<dbReference type="GO" id="GO:0006183">
    <property type="term" value="P:GTP biosynthetic process"/>
    <property type="evidence" value="ECO:0007669"/>
    <property type="project" value="UniProtKB-UniRule"/>
</dbReference>
<dbReference type="GO" id="GO:0006163">
    <property type="term" value="P:purine nucleotide metabolic process"/>
    <property type="evidence" value="ECO:0000318"/>
    <property type="project" value="GO_Central"/>
</dbReference>
<dbReference type="GO" id="GO:0006220">
    <property type="term" value="P:pyrimidine nucleotide metabolic process"/>
    <property type="evidence" value="ECO:0000318"/>
    <property type="project" value="GO_Central"/>
</dbReference>
<dbReference type="GO" id="GO:0006228">
    <property type="term" value="P:UTP biosynthetic process"/>
    <property type="evidence" value="ECO:0007669"/>
    <property type="project" value="UniProtKB-UniRule"/>
</dbReference>
<dbReference type="CDD" id="cd04413">
    <property type="entry name" value="NDPk_I"/>
    <property type="match status" value="1"/>
</dbReference>
<dbReference type="FunFam" id="3.30.70.141:FF:000001">
    <property type="entry name" value="Nucleoside diphosphate kinase"/>
    <property type="match status" value="1"/>
</dbReference>
<dbReference type="Gene3D" id="3.30.70.141">
    <property type="entry name" value="Nucleoside diphosphate kinase-like domain"/>
    <property type="match status" value="1"/>
</dbReference>
<dbReference type="HAMAP" id="MF_00451">
    <property type="entry name" value="NDP_kinase"/>
    <property type="match status" value="1"/>
</dbReference>
<dbReference type="InterPro" id="IPR034907">
    <property type="entry name" value="NDK-like_dom"/>
</dbReference>
<dbReference type="InterPro" id="IPR036850">
    <property type="entry name" value="NDK-like_dom_sf"/>
</dbReference>
<dbReference type="InterPro" id="IPR001564">
    <property type="entry name" value="Nucleoside_diP_kinase"/>
</dbReference>
<dbReference type="InterPro" id="IPR023005">
    <property type="entry name" value="Nucleoside_diP_kinase_AS"/>
</dbReference>
<dbReference type="NCBIfam" id="NF001908">
    <property type="entry name" value="PRK00668.1"/>
    <property type="match status" value="1"/>
</dbReference>
<dbReference type="PANTHER" id="PTHR46161">
    <property type="entry name" value="NUCLEOSIDE DIPHOSPHATE KINASE"/>
    <property type="match status" value="1"/>
</dbReference>
<dbReference type="PANTHER" id="PTHR46161:SF3">
    <property type="entry name" value="NUCLEOSIDE DIPHOSPHATE KINASE DDB_G0292928-RELATED"/>
    <property type="match status" value="1"/>
</dbReference>
<dbReference type="Pfam" id="PF00334">
    <property type="entry name" value="NDK"/>
    <property type="match status" value="1"/>
</dbReference>
<dbReference type="PRINTS" id="PR01243">
    <property type="entry name" value="NUCDPKINASE"/>
</dbReference>
<dbReference type="SMART" id="SM00562">
    <property type="entry name" value="NDK"/>
    <property type="match status" value="1"/>
</dbReference>
<dbReference type="SUPFAM" id="SSF54919">
    <property type="entry name" value="Nucleoside diphosphate kinase, NDK"/>
    <property type="match status" value="1"/>
</dbReference>
<dbReference type="PROSITE" id="PS00469">
    <property type="entry name" value="NDPK"/>
    <property type="match status" value="1"/>
</dbReference>
<dbReference type="PROSITE" id="PS51374">
    <property type="entry name" value="NDPK_LIKE"/>
    <property type="match status" value="1"/>
</dbReference>
<accession>Q89MS3</accession>
<gene>
    <name evidence="1" type="primary">ndk</name>
    <name type="ordered locus">blr4119</name>
</gene>
<organism>
    <name type="scientific">Bradyrhizobium diazoefficiens (strain JCM 10833 / BCRC 13528 / IAM 13628 / NBRC 14792 / USDA 110)</name>
    <dbReference type="NCBI Taxonomy" id="224911"/>
    <lineage>
        <taxon>Bacteria</taxon>
        <taxon>Pseudomonadati</taxon>
        <taxon>Pseudomonadota</taxon>
        <taxon>Alphaproteobacteria</taxon>
        <taxon>Hyphomicrobiales</taxon>
        <taxon>Nitrobacteraceae</taxon>
        <taxon>Bradyrhizobium</taxon>
    </lineage>
</organism>
<protein>
    <recommendedName>
        <fullName evidence="1">Nucleoside diphosphate kinase</fullName>
        <shortName evidence="1">NDK</shortName>
        <shortName evidence="1">NDP kinase</shortName>
        <ecNumber evidence="1">2.7.4.6</ecNumber>
    </recommendedName>
    <alternativeName>
        <fullName evidence="1">Nucleoside-2-P kinase</fullName>
    </alternativeName>
</protein>
<reference key="1">
    <citation type="journal article" date="2002" name="DNA Res.">
        <title>Complete genomic sequence of nitrogen-fixing symbiotic bacterium Bradyrhizobium japonicum USDA110.</title>
        <authorList>
            <person name="Kaneko T."/>
            <person name="Nakamura Y."/>
            <person name="Sato S."/>
            <person name="Minamisawa K."/>
            <person name="Uchiumi T."/>
            <person name="Sasamoto S."/>
            <person name="Watanabe A."/>
            <person name="Idesawa K."/>
            <person name="Iriguchi M."/>
            <person name="Kawashima K."/>
            <person name="Kohara M."/>
            <person name="Matsumoto M."/>
            <person name="Shimpo S."/>
            <person name="Tsuruoka H."/>
            <person name="Wada T."/>
            <person name="Yamada M."/>
            <person name="Tabata S."/>
        </authorList>
    </citation>
    <scope>NUCLEOTIDE SEQUENCE [LARGE SCALE GENOMIC DNA]</scope>
    <source>
        <strain>JCM 10833 / BCRC 13528 / IAM 13628 / NBRC 14792 / USDA 110</strain>
    </source>
</reference>
<comment type="function">
    <text evidence="1">Major role in the synthesis of nucleoside triphosphates other than ATP. The ATP gamma phosphate is transferred to the NDP beta phosphate via a ping-pong mechanism, using a phosphorylated active-site intermediate.</text>
</comment>
<comment type="catalytic activity">
    <reaction evidence="1">
        <text>a 2'-deoxyribonucleoside 5'-diphosphate + ATP = a 2'-deoxyribonucleoside 5'-triphosphate + ADP</text>
        <dbReference type="Rhea" id="RHEA:44640"/>
        <dbReference type="ChEBI" id="CHEBI:30616"/>
        <dbReference type="ChEBI" id="CHEBI:61560"/>
        <dbReference type="ChEBI" id="CHEBI:73316"/>
        <dbReference type="ChEBI" id="CHEBI:456216"/>
        <dbReference type="EC" id="2.7.4.6"/>
    </reaction>
</comment>
<comment type="catalytic activity">
    <reaction evidence="1">
        <text>a ribonucleoside 5'-diphosphate + ATP = a ribonucleoside 5'-triphosphate + ADP</text>
        <dbReference type="Rhea" id="RHEA:18113"/>
        <dbReference type="ChEBI" id="CHEBI:30616"/>
        <dbReference type="ChEBI" id="CHEBI:57930"/>
        <dbReference type="ChEBI" id="CHEBI:61557"/>
        <dbReference type="ChEBI" id="CHEBI:456216"/>
        <dbReference type="EC" id="2.7.4.6"/>
    </reaction>
</comment>
<comment type="cofactor">
    <cofactor evidence="1">
        <name>Mg(2+)</name>
        <dbReference type="ChEBI" id="CHEBI:18420"/>
    </cofactor>
</comment>
<comment type="subunit">
    <text evidence="1">Homotetramer.</text>
</comment>
<comment type="subcellular location">
    <subcellularLocation>
        <location evidence="1">Cytoplasm</location>
    </subcellularLocation>
</comment>
<comment type="similarity">
    <text evidence="1">Belongs to the NDK family.</text>
</comment>
<feature type="chain" id="PRO_0000136954" description="Nucleoside diphosphate kinase">
    <location>
        <begin position="1"/>
        <end position="140"/>
    </location>
</feature>
<feature type="active site" description="Pros-phosphohistidine intermediate" evidence="1">
    <location>
        <position position="117"/>
    </location>
</feature>
<feature type="binding site" evidence="1">
    <location>
        <position position="11"/>
    </location>
    <ligand>
        <name>ATP</name>
        <dbReference type="ChEBI" id="CHEBI:30616"/>
    </ligand>
</feature>
<feature type="binding site" evidence="1">
    <location>
        <position position="59"/>
    </location>
    <ligand>
        <name>ATP</name>
        <dbReference type="ChEBI" id="CHEBI:30616"/>
    </ligand>
</feature>
<feature type="binding site" evidence="1">
    <location>
        <position position="87"/>
    </location>
    <ligand>
        <name>ATP</name>
        <dbReference type="ChEBI" id="CHEBI:30616"/>
    </ligand>
</feature>
<feature type="binding site" evidence="1">
    <location>
        <position position="93"/>
    </location>
    <ligand>
        <name>ATP</name>
        <dbReference type="ChEBI" id="CHEBI:30616"/>
    </ligand>
</feature>
<feature type="binding site" evidence="1">
    <location>
        <position position="104"/>
    </location>
    <ligand>
        <name>ATP</name>
        <dbReference type="ChEBI" id="CHEBI:30616"/>
    </ligand>
</feature>
<feature type="binding site" evidence="1">
    <location>
        <position position="114"/>
    </location>
    <ligand>
        <name>ATP</name>
        <dbReference type="ChEBI" id="CHEBI:30616"/>
    </ligand>
</feature>
<proteinExistence type="inferred from homology"/>
<name>NDK_BRADU</name>
<evidence type="ECO:0000255" key="1">
    <source>
        <dbReference type="HAMAP-Rule" id="MF_00451"/>
    </source>
</evidence>
<sequence length="140" mass="15059">MAIERTFSIIKPDATARNLTGAVNAVIEKAGLRIVAQKRIRMTKEQAETFYAVHKARPFFGELVEFMTSGPVVVQVLEGENAVAKYRDAMGATDPSKAAEGTIRKLYAKSIGENSAHGSDAPETAAIEIAQFFSGNEIVG</sequence>
<keyword id="KW-0067">ATP-binding</keyword>
<keyword id="KW-0963">Cytoplasm</keyword>
<keyword id="KW-0418">Kinase</keyword>
<keyword id="KW-0460">Magnesium</keyword>
<keyword id="KW-0479">Metal-binding</keyword>
<keyword id="KW-0546">Nucleotide metabolism</keyword>
<keyword id="KW-0547">Nucleotide-binding</keyword>
<keyword id="KW-0597">Phosphoprotein</keyword>
<keyword id="KW-1185">Reference proteome</keyword>
<keyword id="KW-0808">Transferase</keyword>